<dbReference type="EMBL" id="BA000043">
    <property type="protein sequence ID" value="BAD77765.1"/>
    <property type="molecule type" value="Genomic_DNA"/>
</dbReference>
<dbReference type="RefSeq" id="WP_008880812.1">
    <property type="nucleotide sequence ID" value="NC_006510.1"/>
</dbReference>
<dbReference type="SMR" id="Q5KU71"/>
<dbReference type="STRING" id="235909.GK3480"/>
<dbReference type="GeneID" id="89612828"/>
<dbReference type="KEGG" id="gka:GK3480"/>
<dbReference type="eggNOG" id="COG0238">
    <property type="taxonomic scope" value="Bacteria"/>
</dbReference>
<dbReference type="HOGENOM" id="CLU_148710_2_2_9"/>
<dbReference type="Proteomes" id="UP000001172">
    <property type="component" value="Chromosome"/>
</dbReference>
<dbReference type="GO" id="GO:0022627">
    <property type="term" value="C:cytosolic small ribosomal subunit"/>
    <property type="evidence" value="ECO:0007669"/>
    <property type="project" value="TreeGrafter"/>
</dbReference>
<dbReference type="GO" id="GO:0070181">
    <property type="term" value="F:small ribosomal subunit rRNA binding"/>
    <property type="evidence" value="ECO:0007669"/>
    <property type="project" value="TreeGrafter"/>
</dbReference>
<dbReference type="GO" id="GO:0003735">
    <property type="term" value="F:structural constituent of ribosome"/>
    <property type="evidence" value="ECO:0007669"/>
    <property type="project" value="InterPro"/>
</dbReference>
<dbReference type="GO" id="GO:0006412">
    <property type="term" value="P:translation"/>
    <property type="evidence" value="ECO:0007669"/>
    <property type="project" value="UniProtKB-UniRule"/>
</dbReference>
<dbReference type="FunFam" id="4.10.640.10:FF:000003">
    <property type="entry name" value="30S ribosomal protein S18"/>
    <property type="match status" value="1"/>
</dbReference>
<dbReference type="Gene3D" id="4.10.640.10">
    <property type="entry name" value="Ribosomal protein S18"/>
    <property type="match status" value="1"/>
</dbReference>
<dbReference type="HAMAP" id="MF_00270">
    <property type="entry name" value="Ribosomal_bS18"/>
    <property type="match status" value="1"/>
</dbReference>
<dbReference type="InterPro" id="IPR001648">
    <property type="entry name" value="Ribosomal_bS18"/>
</dbReference>
<dbReference type="InterPro" id="IPR018275">
    <property type="entry name" value="Ribosomal_bS18_CS"/>
</dbReference>
<dbReference type="InterPro" id="IPR036870">
    <property type="entry name" value="Ribosomal_bS18_sf"/>
</dbReference>
<dbReference type="NCBIfam" id="TIGR00165">
    <property type="entry name" value="S18"/>
    <property type="match status" value="1"/>
</dbReference>
<dbReference type="PANTHER" id="PTHR13479">
    <property type="entry name" value="30S RIBOSOMAL PROTEIN S18"/>
    <property type="match status" value="1"/>
</dbReference>
<dbReference type="PANTHER" id="PTHR13479:SF40">
    <property type="entry name" value="SMALL RIBOSOMAL SUBUNIT PROTEIN BS18M"/>
    <property type="match status" value="1"/>
</dbReference>
<dbReference type="Pfam" id="PF01084">
    <property type="entry name" value="Ribosomal_S18"/>
    <property type="match status" value="1"/>
</dbReference>
<dbReference type="PRINTS" id="PR00974">
    <property type="entry name" value="RIBOSOMALS18"/>
</dbReference>
<dbReference type="SUPFAM" id="SSF46911">
    <property type="entry name" value="Ribosomal protein S18"/>
    <property type="match status" value="1"/>
</dbReference>
<dbReference type="PROSITE" id="PS00057">
    <property type="entry name" value="RIBOSOMAL_S18"/>
    <property type="match status" value="1"/>
</dbReference>
<evidence type="ECO:0000255" key="1">
    <source>
        <dbReference type="HAMAP-Rule" id="MF_00270"/>
    </source>
</evidence>
<evidence type="ECO:0000305" key="2"/>
<keyword id="KW-1185">Reference proteome</keyword>
<keyword id="KW-0687">Ribonucleoprotein</keyword>
<keyword id="KW-0689">Ribosomal protein</keyword>
<keyword id="KW-0694">RNA-binding</keyword>
<keyword id="KW-0699">rRNA-binding</keyword>
<gene>
    <name evidence="1" type="primary">rpsR</name>
    <name type="ordered locus">GK3480</name>
</gene>
<sequence length="78" mass="8969">MAGRKGGRGKRRKVCYFTANNITHIDYKDVDLLKKFISERGKILPRRVTGTSAKYQRKLTVAIKRARQMALLPYVADE</sequence>
<organism>
    <name type="scientific">Geobacillus kaustophilus (strain HTA426)</name>
    <dbReference type="NCBI Taxonomy" id="235909"/>
    <lineage>
        <taxon>Bacteria</taxon>
        <taxon>Bacillati</taxon>
        <taxon>Bacillota</taxon>
        <taxon>Bacilli</taxon>
        <taxon>Bacillales</taxon>
        <taxon>Anoxybacillaceae</taxon>
        <taxon>Geobacillus</taxon>
        <taxon>Geobacillus thermoleovorans group</taxon>
    </lineage>
</organism>
<feature type="chain" id="PRO_1000003500" description="Small ribosomal subunit protein bS18">
    <location>
        <begin position="1"/>
        <end position="78"/>
    </location>
</feature>
<comment type="function">
    <text evidence="1">Binds as a heterodimer with protein bS6 to the central domain of the 16S rRNA, where it helps stabilize the platform of the 30S subunit.</text>
</comment>
<comment type="subunit">
    <text evidence="1">Part of the 30S ribosomal subunit. Forms a tight heterodimer with protein bS6.</text>
</comment>
<comment type="similarity">
    <text evidence="1">Belongs to the bacterial ribosomal protein bS18 family.</text>
</comment>
<name>RS18_GEOKA</name>
<reference key="1">
    <citation type="journal article" date="2004" name="Nucleic Acids Res.">
        <title>Thermoadaptation trait revealed by the genome sequence of thermophilic Geobacillus kaustophilus.</title>
        <authorList>
            <person name="Takami H."/>
            <person name="Takaki Y."/>
            <person name="Chee G.-J."/>
            <person name="Nishi S."/>
            <person name="Shimamura S."/>
            <person name="Suzuki H."/>
            <person name="Matsui S."/>
            <person name="Uchiyama I."/>
        </authorList>
    </citation>
    <scope>NUCLEOTIDE SEQUENCE [LARGE SCALE GENOMIC DNA]</scope>
    <source>
        <strain>HTA426</strain>
    </source>
</reference>
<proteinExistence type="inferred from homology"/>
<protein>
    <recommendedName>
        <fullName evidence="1">Small ribosomal subunit protein bS18</fullName>
    </recommendedName>
    <alternativeName>
        <fullName evidence="2">30S ribosomal protein S18</fullName>
    </alternativeName>
</protein>
<accession>Q5KU71</accession>